<sequence>MSDRPTQGLTWGPRRDFYNESGSQKIIRKLKEEPLVPIGCILTIAAFTNAYRAMRRGDHHKVQRMFRARVAAQGFTVLAMVGGGMYYAEDRNKRKELGKLKQQQEAEEKRQKWIRELEARDEEEKALQEMMDKKRKRASERTMRAETGSEGIAAQARAAFKDKANKGEAAGAEKTEAPSQRADNEKKPAGSGFLGGWFGGSSKTPETPAKDTKGKNLDSESSS</sequence>
<reference key="1">
    <citation type="journal article" date="2015" name="Genome Announc.">
        <title>Draft genome sequence of the cellulolytic fungus Chaetomium globosum.</title>
        <authorList>
            <person name="Cuomo C.A."/>
            <person name="Untereiner W.A."/>
            <person name="Ma L.-J."/>
            <person name="Grabherr M."/>
            <person name="Birren B.W."/>
        </authorList>
    </citation>
    <scope>NUCLEOTIDE SEQUENCE [LARGE SCALE GENOMIC DNA]</scope>
    <source>
        <strain>ATCC 6205 / CBS 148.51 / DSM 1962 / NBRC 6347 / NRRL 1970</strain>
    </source>
</reference>
<gene>
    <name type="primary">RCF1</name>
    <name type="synonym">AIM31</name>
    <name type="ORF">CHGG_10835</name>
</gene>
<name>RCF1_CHAGB</name>
<proteinExistence type="inferred from homology"/>
<comment type="function">
    <text evidence="1">Cytochrome c oxidase subunit which plays a role in assembly of respiratory supercomplexes.</text>
</comment>
<comment type="subunit">
    <text evidence="1">Associates with the respiratory chain complex III/complex IV supercomplex.</text>
</comment>
<comment type="subcellular location">
    <subcellularLocation>
        <location evidence="3">Mitochondrion membrane</location>
        <topology evidence="3">Multi-pass membrane protein</topology>
    </subcellularLocation>
</comment>
<comment type="similarity">
    <text evidence="5">Belongs to the RCF1 family.</text>
</comment>
<accession>Q2GMG9</accession>
<protein>
    <recommendedName>
        <fullName>Respiratory supercomplex factor 1, mitochondrial</fullName>
    </recommendedName>
</protein>
<dbReference type="EMBL" id="CH408036">
    <property type="protein sequence ID" value="EAQ83017.1"/>
    <property type="molecule type" value="Genomic_DNA"/>
</dbReference>
<dbReference type="RefSeq" id="XP_001226102.1">
    <property type="nucleotide sequence ID" value="XM_001226101.1"/>
</dbReference>
<dbReference type="STRING" id="306901.Q2GMG9"/>
<dbReference type="GeneID" id="4397095"/>
<dbReference type="VEuPathDB" id="FungiDB:CHGG_10835"/>
<dbReference type="eggNOG" id="KOG4431">
    <property type="taxonomic scope" value="Eukaryota"/>
</dbReference>
<dbReference type="HOGENOM" id="CLU_087356_0_1_1"/>
<dbReference type="InParanoid" id="Q2GMG9"/>
<dbReference type="OMA" id="YNENAFQ"/>
<dbReference type="OrthoDB" id="6604018at2759"/>
<dbReference type="Proteomes" id="UP000001056">
    <property type="component" value="Unassembled WGS sequence"/>
</dbReference>
<dbReference type="GO" id="GO:0031966">
    <property type="term" value="C:mitochondrial membrane"/>
    <property type="evidence" value="ECO:0007669"/>
    <property type="project" value="UniProtKB-SubCell"/>
</dbReference>
<dbReference type="GO" id="GO:0097250">
    <property type="term" value="P:mitochondrial respirasome assembly"/>
    <property type="evidence" value="ECO:0007669"/>
    <property type="project" value="TreeGrafter"/>
</dbReference>
<dbReference type="Gene3D" id="6.10.140.1320">
    <property type="match status" value="1"/>
</dbReference>
<dbReference type="InterPro" id="IPR007667">
    <property type="entry name" value="Hypoxia_induced_domain"/>
</dbReference>
<dbReference type="InterPro" id="IPR050355">
    <property type="entry name" value="RCF1"/>
</dbReference>
<dbReference type="PANTHER" id="PTHR12297:SF3">
    <property type="entry name" value="HIG1 DOMAIN FAMILY MEMBER 1A"/>
    <property type="match status" value="1"/>
</dbReference>
<dbReference type="PANTHER" id="PTHR12297">
    <property type="entry name" value="HYPOXIA-INDUCBILE GENE 1 HIG1 -RELATED"/>
    <property type="match status" value="1"/>
</dbReference>
<dbReference type="Pfam" id="PF04588">
    <property type="entry name" value="HIG_1_N"/>
    <property type="match status" value="1"/>
</dbReference>
<dbReference type="PROSITE" id="PS51503">
    <property type="entry name" value="HIG1"/>
    <property type="match status" value="1"/>
</dbReference>
<keyword id="KW-0175">Coiled coil</keyword>
<keyword id="KW-0472">Membrane</keyword>
<keyword id="KW-0496">Mitochondrion</keyword>
<keyword id="KW-1185">Reference proteome</keyword>
<keyword id="KW-0812">Transmembrane</keyword>
<keyword id="KW-1133">Transmembrane helix</keyword>
<evidence type="ECO:0000250" key="1"/>
<evidence type="ECO:0000255" key="2"/>
<evidence type="ECO:0000255" key="3">
    <source>
        <dbReference type="PROSITE-ProRule" id="PRU00836"/>
    </source>
</evidence>
<evidence type="ECO:0000256" key="4">
    <source>
        <dbReference type="SAM" id="MobiDB-lite"/>
    </source>
</evidence>
<evidence type="ECO:0000305" key="5"/>
<organism>
    <name type="scientific">Chaetomium globosum (strain ATCC 6205 / CBS 148.51 / DSM 1962 / NBRC 6347 / NRRL 1970)</name>
    <name type="common">Soil fungus</name>
    <dbReference type="NCBI Taxonomy" id="306901"/>
    <lineage>
        <taxon>Eukaryota</taxon>
        <taxon>Fungi</taxon>
        <taxon>Dikarya</taxon>
        <taxon>Ascomycota</taxon>
        <taxon>Pezizomycotina</taxon>
        <taxon>Sordariomycetes</taxon>
        <taxon>Sordariomycetidae</taxon>
        <taxon>Sordariales</taxon>
        <taxon>Chaetomiaceae</taxon>
        <taxon>Chaetomium</taxon>
    </lineage>
</organism>
<feature type="chain" id="PRO_0000399628" description="Respiratory supercomplex factor 1, mitochondrial">
    <location>
        <begin position="1"/>
        <end position="223"/>
    </location>
</feature>
<feature type="transmembrane region" description="Helical" evidence="3">
    <location>
        <begin position="34"/>
        <end position="53"/>
    </location>
</feature>
<feature type="transmembrane region" description="Helical" evidence="3">
    <location>
        <begin position="66"/>
        <end position="88"/>
    </location>
</feature>
<feature type="domain" description="HIG1" evidence="3">
    <location>
        <begin position="7"/>
        <end position="98"/>
    </location>
</feature>
<feature type="region of interest" description="Disordered" evidence="4">
    <location>
        <begin position="121"/>
        <end position="223"/>
    </location>
</feature>
<feature type="coiled-coil region" evidence="2">
    <location>
        <begin position="87"/>
        <end position="139"/>
    </location>
</feature>
<feature type="compositionally biased region" description="Basic and acidic residues" evidence="4">
    <location>
        <begin position="121"/>
        <end position="132"/>
    </location>
</feature>
<feature type="compositionally biased region" description="Basic and acidic residues" evidence="4">
    <location>
        <begin position="159"/>
        <end position="188"/>
    </location>
</feature>
<feature type="compositionally biased region" description="Basic and acidic residues" evidence="4">
    <location>
        <begin position="208"/>
        <end position="223"/>
    </location>
</feature>